<name>VATB_NITOC</name>
<evidence type="ECO:0000255" key="1">
    <source>
        <dbReference type="HAMAP-Rule" id="MF_00310"/>
    </source>
</evidence>
<evidence type="ECO:0000256" key="2">
    <source>
        <dbReference type="SAM" id="MobiDB-lite"/>
    </source>
</evidence>
<feature type="chain" id="PRO_1000059385" description="V-type ATP synthase beta chain">
    <location>
        <begin position="1"/>
        <end position="479"/>
    </location>
</feature>
<feature type="region of interest" description="Disordered" evidence="2">
    <location>
        <begin position="458"/>
        <end position="479"/>
    </location>
</feature>
<proteinExistence type="inferred from homology"/>
<protein>
    <recommendedName>
        <fullName evidence="1">V-type ATP synthase beta chain</fullName>
    </recommendedName>
    <alternativeName>
        <fullName evidence="1">V-ATPase subunit B</fullName>
    </alternativeName>
</protein>
<sequence length="479" mass="53517">MKEKEYRTASAARGGLLFMRDIPGGAFGERVIVKDHRGRRRNGQVIFTSGEVVLVQVFEGTDDLDLERTWVRFLEEPFEIPLSPDVLGRIFDGVGAPRDDRPPMIAPLKRNVNGAPVNPVARAYPQEFIQTGIAAIDGLNSLVRGQKLPIFSGSGLPHNRLAAQIVRQAKLLGEETRFVMVFAAMGVTYSDARFFQEEFENSGVLGKVVMYLNLADDPPIKRLLLPRTALACAEYLAFEQDLHVLVVMTDMTHYAEALREVATAKGDVPSRKGYPGYLYSDLAEIYERAGRIKNRRGSITMVPVVSMPSDDITHPIPDLTGYITEGQIVLSRELHHQGIYPPVNIPPSLSRLMKDGIGKNSTREDHPRVASQLYAAYAKALEVRNLASIIGAEELSPSDRQFLDFAGQFEQRFVKQGEEEDRSIIETLDLAWDLLSLLPQFALTRVTEADLAKYHKWEGDSEREAPKMDSPHEEISEKS</sequence>
<dbReference type="EMBL" id="CP000127">
    <property type="protein sequence ID" value="ABA58542.1"/>
    <property type="molecule type" value="Genomic_DNA"/>
</dbReference>
<dbReference type="RefSeq" id="WP_002810294.1">
    <property type="nucleotide sequence ID" value="NC_007484.1"/>
</dbReference>
<dbReference type="SMR" id="Q3J9F4"/>
<dbReference type="STRING" id="323261.Noc_2082"/>
<dbReference type="KEGG" id="noc:Noc_2082"/>
<dbReference type="eggNOG" id="COG1156">
    <property type="taxonomic scope" value="Bacteria"/>
</dbReference>
<dbReference type="HOGENOM" id="CLU_022916_0_0_6"/>
<dbReference type="InParanoid" id="Q3J9F4"/>
<dbReference type="Proteomes" id="UP000006838">
    <property type="component" value="Chromosome"/>
</dbReference>
<dbReference type="GO" id="GO:0005524">
    <property type="term" value="F:ATP binding"/>
    <property type="evidence" value="ECO:0007669"/>
    <property type="project" value="UniProtKB-UniRule"/>
</dbReference>
<dbReference type="GO" id="GO:0046933">
    <property type="term" value="F:proton-transporting ATP synthase activity, rotational mechanism"/>
    <property type="evidence" value="ECO:0007669"/>
    <property type="project" value="UniProtKB-UniRule"/>
</dbReference>
<dbReference type="GO" id="GO:0042777">
    <property type="term" value="P:proton motive force-driven plasma membrane ATP synthesis"/>
    <property type="evidence" value="ECO:0007669"/>
    <property type="project" value="UniProtKB-UniRule"/>
</dbReference>
<dbReference type="CDD" id="cd18112">
    <property type="entry name" value="ATP-synt_V_A-type_beta_C"/>
    <property type="match status" value="1"/>
</dbReference>
<dbReference type="CDD" id="cd18118">
    <property type="entry name" value="ATP-synt_V_A-type_beta_N"/>
    <property type="match status" value="1"/>
</dbReference>
<dbReference type="CDD" id="cd01135">
    <property type="entry name" value="V_A-ATPase_B"/>
    <property type="match status" value="1"/>
</dbReference>
<dbReference type="Gene3D" id="3.40.50.12240">
    <property type="match status" value="1"/>
</dbReference>
<dbReference type="HAMAP" id="MF_00310">
    <property type="entry name" value="ATP_synth_B_arch"/>
    <property type="match status" value="1"/>
</dbReference>
<dbReference type="InterPro" id="IPR055190">
    <property type="entry name" value="ATP-synt_VA_C"/>
</dbReference>
<dbReference type="InterPro" id="IPR020003">
    <property type="entry name" value="ATPase_a/bsu_AS"/>
</dbReference>
<dbReference type="InterPro" id="IPR004100">
    <property type="entry name" value="ATPase_F1/V1/A1_a/bsu_N"/>
</dbReference>
<dbReference type="InterPro" id="IPR000194">
    <property type="entry name" value="ATPase_F1/V1/A1_a/bsu_nucl-bd"/>
</dbReference>
<dbReference type="InterPro" id="IPR027417">
    <property type="entry name" value="P-loop_NTPase"/>
</dbReference>
<dbReference type="InterPro" id="IPR022879">
    <property type="entry name" value="V-ATPase_su_B/beta"/>
</dbReference>
<dbReference type="NCBIfam" id="NF003235">
    <property type="entry name" value="PRK04196.1"/>
    <property type="match status" value="1"/>
</dbReference>
<dbReference type="PANTHER" id="PTHR43389">
    <property type="entry name" value="V-TYPE PROTON ATPASE SUBUNIT B"/>
    <property type="match status" value="1"/>
</dbReference>
<dbReference type="PANTHER" id="PTHR43389:SF4">
    <property type="entry name" value="V-TYPE PROTON ATPASE SUBUNIT B"/>
    <property type="match status" value="1"/>
</dbReference>
<dbReference type="Pfam" id="PF00006">
    <property type="entry name" value="ATP-synt_ab"/>
    <property type="match status" value="1"/>
</dbReference>
<dbReference type="Pfam" id="PF02874">
    <property type="entry name" value="ATP-synt_ab_N"/>
    <property type="match status" value="1"/>
</dbReference>
<dbReference type="Pfam" id="PF22919">
    <property type="entry name" value="ATP-synt_VA_C"/>
    <property type="match status" value="1"/>
</dbReference>
<dbReference type="SUPFAM" id="SSF47917">
    <property type="entry name" value="C-terminal domain of alpha and beta subunits of F1 ATP synthase"/>
    <property type="match status" value="1"/>
</dbReference>
<dbReference type="SUPFAM" id="SSF52540">
    <property type="entry name" value="P-loop containing nucleoside triphosphate hydrolases"/>
    <property type="match status" value="1"/>
</dbReference>
<dbReference type="PROSITE" id="PS00152">
    <property type="entry name" value="ATPASE_ALPHA_BETA"/>
    <property type="match status" value="1"/>
</dbReference>
<comment type="function">
    <text evidence="1">Produces ATP from ADP in the presence of a proton gradient across the membrane. The V-type beta chain is a regulatory subunit.</text>
</comment>
<comment type="similarity">
    <text evidence="1">Belongs to the ATPase alpha/beta chains family.</text>
</comment>
<gene>
    <name evidence="1" type="primary">atpB</name>
    <name type="ordered locus">Noc_2082</name>
</gene>
<organism>
    <name type="scientific">Nitrosococcus oceani (strain ATCC 19707 / BCRC 17464 / JCM 30415 / NCIMB 11848 / C-107)</name>
    <dbReference type="NCBI Taxonomy" id="323261"/>
    <lineage>
        <taxon>Bacteria</taxon>
        <taxon>Pseudomonadati</taxon>
        <taxon>Pseudomonadota</taxon>
        <taxon>Gammaproteobacteria</taxon>
        <taxon>Chromatiales</taxon>
        <taxon>Chromatiaceae</taxon>
        <taxon>Nitrosococcus</taxon>
    </lineage>
</organism>
<reference key="1">
    <citation type="journal article" date="2006" name="Appl. Environ. Microbiol.">
        <title>Complete genome sequence of the marine, chemolithoautotrophic, ammonia-oxidizing bacterium Nitrosococcus oceani ATCC 19707.</title>
        <authorList>
            <person name="Klotz M.G."/>
            <person name="Arp D.J."/>
            <person name="Chain P.S.G."/>
            <person name="El-Sheikh A.F."/>
            <person name="Hauser L.J."/>
            <person name="Hommes N.G."/>
            <person name="Larimer F.W."/>
            <person name="Malfatti S.A."/>
            <person name="Norton J.M."/>
            <person name="Poret-Peterson A.T."/>
            <person name="Vergez L.M."/>
            <person name="Ward B.B."/>
        </authorList>
    </citation>
    <scope>NUCLEOTIDE SEQUENCE [LARGE SCALE GENOMIC DNA]</scope>
    <source>
        <strain>ATCC 19707 / BCRC 17464 / JCM 30415 / NCIMB 11848 / C-107</strain>
    </source>
</reference>
<accession>Q3J9F4</accession>
<keyword id="KW-0066">ATP synthesis</keyword>
<keyword id="KW-0375">Hydrogen ion transport</keyword>
<keyword id="KW-0406">Ion transport</keyword>
<keyword id="KW-1185">Reference proteome</keyword>
<keyword id="KW-0813">Transport</keyword>